<organism>
    <name type="scientific">Francisella tularensis subsp. tularensis (strain WY96-3418)</name>
    <dbReference type="NCBI Taxonomy" id="418136"/>
    <lineage>
        <taxon>Bacteria</taxon>
        <taxon>Pseudomonadati</taxon>
        <taxon>Pseudomonadota</taxon>
        <taxon>Gammaproteobacteria</taxon>
        <taxon>Thiotrichales</taxon>
        <taxon>Francisellaceae</taxon>
        <taxon>Francisella</taxon>
    </lineage>
</organism>
<accession>A4IZS9</accession>
<reference key="1">
    <citation type="journal article" date="2007" name="PLoS ONE">
        <title>Complete genomic characterization of a pathogenic A.II strain of Francisella tularensis subspecies tularensis.</title>
        <authorList>
            <person name="Beckstrom-Sternberg S.M."/>
            <person name="Auerbach R.K."/>
            <person name="Godbole S."/>
            <person name="Pearson J.V."/>
            <person name="Beckstrom-Sternberg J.S."/>
            <person name="Deng Z."/>
            <person name="Munk C."/>
            <person name="Kubota K."/>
            <person name="Zhou Y."/>
            <person name="Bruce D."/>
            <person name="Noronha J."/>
            <person name="Scheuermann R.H."/>
            <person name="Wang A."/>
            <person name="Wei X."/>
            <person name="Wang J."/>
            <person name="Hao J."/>
            <person name="Wagner D.M."/>
            <person name="Brettin T.S."/>
            <person name="Brown N."/>
            <person name="Gilna P."/>
            <person name="Keim P.S."/>
        </authorList>
    </citation>
    <scope>NUCLEOTIDE SEQUENCE [LARGE SCALE GENOMIC DNA]</scope>
    <source>
        <strain>WY96-3418</strain>
    </source>
</reference>
<feature type="chain" id="PRO_1000052575" description="Large ribosomal subunit protein uL22">
    <location>
        <begin position="1"/>
        <end position="111"/>
    </location>
</feature>
<proteinExistence type="inferred from homology"/>
<gene>
    <name evidence="1" type="primary">rplV</name>
    <name type="ordered locus">FTW_1752</name>
</gene>
<keyword id="KW-0687">Ribonucleoprotein</keyword>
<keyword id="KW-0689">Ribosomal protein</keyword>
<keyword id="KW-0694">RNA-binding</keyword>
<keyword id="KW-0699">rRNA-binding</keyword>
<dbReference type="EMBL" id="CP000608">
    <property type="protein sequence ID" value="ABO47428.1"/>
    <property type="molecule type" value="Genomic_DNA"/>
</dbReference>
<dbReference type="RefSeq" id="WP_003027193.1">
    <property type="nucleotide sequence ID" value="NC_009257.1"/>
</dbReference>
<dbReference type="SMR" id="A4IZS9"/>
<dbReference type="GeneID" id="75264256"/>
<dbReference type="KEGG" id="ftw:FTW_1752"/>
<dbReference type="HOGENOM" id="CLU_083987_3_3_6"/>
<dbReference type="GO" id="GO:0022625">
    <property type="term" value="C:cytosolic large ribosomal subunit"/>
    <property type="evidence" value="ECO:0007669"/>
    <property type="project" value="TreeGrafter"/>
</dbReference>
<dbReference type="GO" id="GO:0019843">
    <property type="term" value="F:rRNA binding"/>
    <property type="evidence" value="ECO:0007669"/>
    <property type="project" value="UniProtKB-UniRule"/>
</dbReference>
<dbReference type="GO" id="GO:0003735">
    <property type="term" value="F:structural constituent of ribosome"/>
    <property type="evidence" value="ECO:0007669"/>
    <property type="project" value="InterPro"/>
</dbReference>
<dbReference type="GO" id="GO:0006412">
    <property type="term" value="P:translation"/>
    <property type="evidence" value="ECO:0007669"/>
    <property type="project" value="UniProtKB-UniRule"/>
</dbReference>
<dbReference type="CDD" id="cd00336">
    <property type="entry name" value="Ribosomal_L22"/>
    <property type="match status" value="1"/>
</dbReference>
<dbReference type="FunFam" id="3.90.470.10:FF:000001">
    <property type="entry name" value="50S ribosomal protein L22"/>
    <property type="match status" value="1"/>
</dbReference>
<dbReference type="Gene3D" id="3.90.470.10">
    <property type="entry name" value="Ribosomal protein L22/L17"/>
    <property type="match status" value="1"/>
</dbReference>
<dbReference type="HAMAP" id="MF_01331_B">
    <property type="entry name" value="Ribosomal_uL22_B"/>
    <property type="match status" value="1"/>
</dbReference>
<dbReference type="InterPro" id="IPR001063">
    <property type="entry name" value="Ribosomal_uL22"/>
</dbReference>
<dbReference type="InterPro" id="IPR005727">
    <property type="entry name" value="Ribosomal_uL22_bac/chlpt-type"/>
</dbReference>
<dbReference type="InterPro" id="IPR047867">
    <property type="entry name" value="Ribosomal_uL22_bac/org-type"/>
</dbReference>
<dbReference type="InterPro" id="IPR018260">
    <property type="entry name" value="Ribosomal_uL22_CS"/>
</dbReference>
<dbReference type="InterPro" id="IPR036394">
    <property type="entry name" value="Ribosomal_uL22_sf"/>
</dbReference>
<dbReference type="NCBIfam" id="TIGR01044">
    <property type="entry name" value="rplV_bact"/>
    <property type="match status" value="1"/>
</dbReference>
<dbReference type="PANTHER" id="PTHR13501">
    <property type="entry name" value="CHLOROPLAST 50S RIBOSOMAL PROTEIN L22-RELATED"/>
    <property type="match status" value="1"/>
</dbReference>
<dbReference type="PANTHER" id="PTHR13501:SF8">
    <property type="entry name" value="LARGE RIBOSOMAL SUBUNIT PROTEIN UL22M"/>
    <property type="match status" value="1"/>
</dbReference>
<dbReference type="Pfam" id="PF00237">
    <property type="entry name" value="Ribosomal_L22"/>
    <property type="match status" value="1"/>
</dbReference>
<dbReference type="SUPFAM" id="SSF54843">
    <property type="entry name" value="Ribosomal protein L22"/>
    <property type="match status" value="1"/>
</dbReference>
<dbReference type="PROSITE" id="PS00464">
    <property type="entry name" value="RIBOSOMAL_L22"/>
    <property type="match status" value="1"/>
</dbReference>
<sequence length="111" mass="12201">MEVQAKLKFARISAQKCRLVADQIRGLPVEQAINLLTFSNKKAAVLIKGVLNSAVANAEHNDGMDVDSLVVSTIFVDEGPTMKRFEARAKGRGNRILKRTSHITVKVAEKK</sequence>
<name>RL22_FRATW</name>
<protein>
    <recommendedName>
        <fullName evidence="1">Large ribosomal subunit protein uL22</fullName>
    </recommendedName>
    <alternativeName>
        <fullName evidence="2">50S ribosomal protein L22</fullName>
    </alternativeName>
</protein>
<evidence type="ECO:0000255" key="1">
    <source>
        <dbReference type="HAMAP-Rule" id="MF_01331"/>
    </source>
</evidence>
<evidence type="ECO:0000305" key="2"/>
<comment type="function">
    <text evidence="1">This protein binds specifically to 23S rRNA; its binding is stimulated by other ribosomal proteins, e.g. L4, L17, and L20. It is important during the early stages of 50S assembly. It makes multiple contacts with different domains of the 23S rRNA in the assembled 50S subunit and ribosome (By similarity).</text>
</comment>
<comment type="function">
    <text evidence="1">The globular domain of the protein is located near the polypeptide exit tunnel on the outside of the subunit, while an extended beta-hairpin is found that lines the wall of the exit tunnel in the center of the 70S ribosome.</text>
</comment>
<comment type="subunit">
    <text evidence="1">Part of the 50S ribosomal subunit.</text>
</comment>
<comment type="similarity">
    <text evidence="1">Belongs to the universal ribosomal protein uL22 family.</text>
</comment>